<comment type="function">
    <text evidence="1">One of the primary rRNA binding proteins. Required for association of the 30S and 50S subunits to form the 70S ribosome, for tRNA binding and peptide bond formation. It has been suggested to have peptidyltransferase activity; this is somewhat controversial. Makes several contacts with the 16S rRNA in the 70S ribosome.</text>
</comment>
<comment type="subunit">
    <text evidence="1">Part of the 50S ribosomal subunit. Forms a bridge to the 30S subunit in the 70S ribosome.</text>
</comment>
<comment type="similarity">
    <text evidence="1">Belongs to the universal ribosomal protein uL2 family.</text>
</comment>
<organism>
    <name type="scientific">Xanthomonas campestris pv. campestris (strain 8004)</name>
    <dbReference type="NCBI Taxonomy" id="314565"/>
    <lineage>
        <taxon>Bacteria</taxon>
        <taxon>Pseudomonadati</taxon>
        <taxon>Pseudomonadota</taxon>
        <taxon>Gammaproteobacteria</taxon>
        <taxon>Lysobacterales</taxon>
        <taxon>Lysobacteraceae</taxon>
        <taxon>Xanthomonas</taxon>
    </lineage>
</organism>
<accession>Q4URE2</accession>
<feature type="chain" id="PRO_0000237267" description="Large ribosomal subunit protein uL2">
    <location>
        <begin position="1"/>
        <end position="275"/>
    </location>
</feature>
<feature type="region of interest" description="Disordered" evidence="2">
    <location>
        <begin position="223"/>
        <end position="275"/>
    </location>
</feature>
<proteinExistence type="inferred from homology"/>
<reference key="1">
    <citation type="journal article" date="2005" name="Genome Res.">
        <title>Comparative and functional genomic analyses of the pathogenicity of phytopathogen Xanthomonas campestris pv. campestris.</title>
        <authorList>
            <person name="Qian W."/>
            <person name="Jia Y."/>
            <person name="Ren S.-X."/>
            <person name="He Y.-Q."/>
            <person name="Feng J.-X."/>
            <person name="Lu L.-F."/>
            <person name="Sun Q."/>
            <person name="Ying G."/>
            <person name="Tang D.-J."/>
            <person name="Tang H."/>
            <person name="Wu W."/>
            <person name="Hao P."/>
            <person name="Wang L."/>
            <person name="Jiang B.-L."/>
            <person name="Zeng S."/>
            <person name="Gu W.-Y."/>
            <person name="Lu G."/>
            <person name="Rong L."/>
            <person name="Tian Y."/>
            <person name="Yao Z."/>
            <person name="Fu G."/>
            <person name="Chen B."/>
            <person name="Fang R."/>
            <person name="Qiang B."/>
            <person name="Chen Z."/>
            <person name="Zhao G.-P."/>
            <person name="Tang J.-L."/>
            <person name="He C."/>
        </authorList>
    </citation>
    <scope>NUCLEOTIDE SEQUENCE [LARGE SCALE GENOMIC DNA]</scope>
    <source>
        <strain>8004</strain>
    </source>
</reference>
<name>RL2_XANC8</name>
<gene>
    <name evidence="1" type="primary">rplB</name>
    <name type="ordered locus">XC_3337</name>
</gene>
<evidence type="ECO:0000255" key="1">
    <source>
        <dbReference type="HAMAP-Rule" id="MF_01320"/>
    </source>
</evidence>
<evidence type="ECO:0000256" key="2">
    <source>
        <dbReference type="SAM" id="MobiDB-lite"/>
    </source>
</evidence>
<evidence type="ECO:0000305" key="3"/>
<keyword id="KW-0687">Ribonucleoprotein</keyword>
<keyword id="KW-0689">Ribosomal protein</keyword>
<keyword id="KW-0694">RNA-binding</keyword>
<keyword id="KW-0699">rRNA-binding</keyword>
<dbReference type="EMBL" id="CP000050">
    <property type="protein sequence ID" value="AAY50381.1"/>
    <property type="molecule type" value="Genomic_DNA"/>
</dbReference>
<dbReference type="RefSeq" id="WP_011036125.1">
    <property type="nucleotide sequence ID" value="NZ_CP155948.1"/>
</dbReference>
<dbReference type="SMR" id="Q4URE2"/>
<dbReference type="KEGG" id="xcb:XC_3337"/>
<dbReference type="HOGENOM" id="CLU_036235_2_1_6"/>
<dbReference type="Proteomes" id="UP000000420">
    <property type="component" value="Chromosome"/>
</dbReference>
<dbReference type="GO" id="GO:0015934">
    <property type="term" value="C:large ribosomal subunit"/>
    <property type="evidence" value="ECO:0007669"/>
    <property type="project" value="InterPro"/>
</dbReference>
<dbReference type="GO" id="GO:0019843">
    <property type="term" value="F:rRNA binding"/>
    <property type="evidence" value="ECO:0007669"/>
    <property type="project" value="UniProtKB-UniRule"/>
</dbReference>
<dbReference type="GO" id="GO:0003735">
    <property type="term" value="F:structural constituent of ribosome"/>
    <property type="evidence" value="ECO:0007669"/>
    <property type="project" value="InterPro"/>
</dbReference>
<dbReference type="GO" id="GO:0016740">
    <property type="term" value="F:transferase activity"/>
    <property type="evidence" value="ECO:0007669"/>
    <property type="project" value="InterPro"/>
</dbReference>
<dbReference type="GO" id="GO:0002181">
    <property type="term" value="P:cytoplasmic translation"/>
    <property type="evidence" value="ECO:0007669"/>
    <property type="project" value="TreeGrafter"/>
</dbReference>
<dbReference type="FunFam" id="2.30.30.30:FF:000001">
    <property type="entry name" value="50S ribosomal protein L2"/>
    <property type="match status" value="1"/>
</dbReference>
<dbReference type="FunFam" id="2.40.50.140:FF:000003">
    <property type="entry name" value="50S ribosomal protein L2"/>
    <property type="match status" value="1"/>
</dbReference>
<dbReference type="FunFam" id="4.10.950.10:FF:000001">
    <property type="entry name" value="50S ribosomal protein L2"/>
    <property type="match status" value="1"/>
</dbReference>
<dbReference type="Gene3D" id="2.30.30.30">
    <property type="match status" value="1"/>
</dbReference>
<dbReference type="Gene3D" id="2.40.50.140">
    <property type="entry name" value="Nucleic acid-binding proteins"/>
    <property type="match status" value="1"/>
</dbReference>
<dbReference type="Gene3D" id="4.10.950.10">
    <property type="entry name" value="Ribosomal protein L2, domain 3"/>
    <property type="match status" value="1"/>
</dbReference>
<dbReference type="HAMAP" id="MF_01320_B">
    <property type="entry name" value="Ribosomal_uL2_B"/>
    <property type="match status" value="1"/>
</dbReference>
<dbReference type="InterPro" id="IPR012340">
    <property type="entry name" value="NA-bd_OB-fold"/>
</dbReference>
<dbReference type="InterPro" id="IPR014722">
    <property type="entry name" value="Rib_uL2_dom2"/>
</dbReference>
<dbReference type="InterPro" id="IPR002171">
    <property type="entry name" value="Ribosomal_uL2"/>
</dbReference>
<dbReference type="InterPro" id="IPR005880">
    <property type="entry name" value="Ribosomal_uL2_bac/org-type"/>
</dbReference>
<dbReference type="InterPro" id="IPR022669">
    <property type="entry name" value="Ribosomal_uL2_C"/>
</dbReference>
<dbReference type="InterPro" id="IPR022671">
    <property type="entry name" value="Ribosomal_uL2_CS"/>
</dbReference>
<dbReference type="InterPro" id="IPR014726">
    <property type="entry name" value="Ribosomal_uL2_dom3"/>
</dbReference>
<dbReference type="InterPro" id="IPR022666">
    <property type="entry name" value="Ribosomal_uL2_RNA-bd_dom"/>
</dbReference>
<dbReference type="InterPro" id="IPR008991">
    <property type="entry name" value="Translation_prot_SH3-like_sf"/>
</dbReference>
<dbReference type="NCBIfam" id="TIGR01171">
    <property type="entry name" value="rplB_bact"/>
    <property type="match status" value="1"/>
</dbReference>
<dbReference type="PANTHER" id="PTHR13691:SF5">
    <property type="entry name" value="LARGE RIBOSOMAL SUBUNIT PROTEIN UL2M"/>
    <property type="match status" value="1"/>
</dbReference>
<dbReference type="PANTHER" id="PTHR13691">
    <property type="entry name" value="RIBOSOMAL PROTEIN L2"/>
    <property type="match status" value="1"/>
</dbReference>
<dbReference type="Pfam" id="PF00181">
    <property type="entry name" value="Ribosomal_L2"/>
    <property type="match status" value="1"/>
</dbReference>
<dbReference type="Pfam" id="PF03947">
    <property type="entry name" value="Ribosomal_L2_C"/>
    <property type="match status" value="1"/>
</dbReference>
<dbReference type="PIRSF" id="PIRSF002158">
    <property type="entry name" value="Ribosomal_L2"/>
    <property type="match status" value="1"/>
</dbReference>
<dbReference type="SMART" id="SM01383">
    <property type="entry name" value="Ribosomal_L2"/>
    <property type="match status" value="1"/>
</dbReference>
<dbReference type="SMART" id="SM01382">
    <property type="entry name" value="Ribosomal_L2_C"/>
    <property type="match status" value="1"/>
</dbReference>
<dbReference type="SUPFAM" id="SSF50249">
    <property type="entry name" value="Nucleic acid-binding proteins"/>
    <property type="match status" value="1"/>
</dbReference>
<dbReference type="SUPFAM" id="SSF50104">
    <property type="entry name" value="Translation proteins SH3-like domain"/>
    <property type="match status" value="1"/>
</dbReference>
<dbReference type="PROSITE" id="PS00467">
    <property type="entry name" value="RIBOSOMAL_L2"/>
    <property type="match status" value="1"/>
</dbReference>
<sequence length="275" mass="29827">MPLMKFKPTSPGRRSAVRVVTPDLHKGAPHAALLDSQSKSGGRNHHGRITVRHVGGGHKQHYRIIDFKRNKEGIPARVERIEYDPNRTAHIALLCYVDGERRYIIAPKGLKAGDQVIAGANAPIKTGNALPLRNIPVGTTVHGIELKPGKGAQIARAAGAAVQLVAREGIYATLRLRSGEMRKVPVECRATIGEVGNDEHNLEKLGKAGAKRRRGVRPTVRGAAMNANDHPHGGGEAKAGQGNPHPVTPWGVPTKGYKTRKNKRTQQFIVRDRRG</sequence>
<protein>
    <recommendedName>
        <fullName evidence="1">Large ribosomal subunit protein uL2</fullName>
    </recommendedName>
    <alternativeName>
        <fullName evidence="3">50S ribosomal protein L2</fullName>
    </alternativeName>
</protein>